<protein>
    <recommendedName>
        <fullName evidence="8">Late embryogenesis abundant protein 19</fullName>
        <shortName evidence="7">OsLEA19</shortName>
    </recommendedName>
    <alternativeName>
        <fullName evidence="8">Late embryogenesis abundant protein, group 3</fullName>
        <shortName evidence="8">LEA-3</shortName>
    </alternativeName>
    <alternativeName>
        <fullName evidence="8">OsLEA3-1</fullName>
    </alternativeName>
</protein>
<accession>P0C5A4</accession>
<accession>P83197</accession>
<accession>Q0PMA1</accession>
<accession>Q40696</accession>
<accession>Q40741</accession>
<accession>Q65XN9</accession>
<accession>Q9SBI3</accession>
<evidence type="ECO:0000250" key="1">
    <source>
        <dbReference type="UniProtKB" id="A2Y720"/>
    </source>
</evidence>
<evidence type="ECO:0000255" key="2"/>
<evidence type="ECO:0000256" key="3">
    <source>
        <dbReference type="SAM" id="MobiDB-lite"/>
    </source>
</evidence>
<evidence type="ECO:0000269" key="4">
    <source>
    </source>
</evidence>
<evidence type="ECO:0000303" key="5">
    <source>
    </source>
</evidence>
<evidence type="ECO:0000303" key="6">
    <source>
    </source>
</evidence>
<evidence type="ECO:0000303" key="7">
    <source ref="7"/>
</evidence>
<evidence type="ECO:0000305" key="8"/>
<evidence type="ECO:0000312" key="9">
    <source>
        <dbReference type="EMBL" id="AAU43988.1"/>
    </source>
</evidence>
<evidence type="ECO:0000312" key="10">
    <source>
        <dbReference type="EMBL" id="AAV67829.1"/>
    </source>
</evidence>
<evidence type="ECO:0000312" key="11">
    <source>
        <dbReference type="EMBL" id="BAS95138.1"/>
    </source>
</evidence>
<name>LEA19_ORYSJ</name>
<reference key="1">
    <citation type="online journal article" date="1996" name="Plant Gene Register">
        <title>A rice embryo-specific cDNA encoding a late embryogenesis abundant group 3 protein.</title>
        <authorList>
            <person name="Chen P.-W."/>
            <person name="Chen L.-J."/>
        </authorList>
        <locator>PGR96-049</locator>
    </citation>
    <scope>NUCLEOTIDE SEQUENCE [GENOMIC DNA / MRNA] (ISOFORM 1)</scope>
    <source>
        <strain>cv. Lomello</strain>
        <tissue>Embryo</tissue>
    </source>
</reference>
<reference key="2">
    <citation type="submission" date="1998-02" db="EMBL/GenBank/DDBJ databases">
        <authorList>
            <person name="Chen L.J."/>
            <person name="Wang L.D."/>
            <person name="Chen P.W."/>
        </authorList>
    </citation>
    <scope>NUCLEOTIDE SEQUENCE [GENOMIC DNA]</scope>
    <source>
        <strain>cv. Lomello</strain>
    </source>
</reference>
<reference key="3">
    <citation type="journal article" date="2005" name="Mol. Genet. Genomics">
        <title>A fine physical map of the rice chromosome 5.</title>
        <authorList>
            <person name="Cheng C.-H."/>
            <person name="Chung M.C."/>
            <person name="Liu S.-M."/>
            <person name="Chen S.-K."/>
            <person name="Kao F.Y."/>
            <person name="Lin S.-J."/>
            <person name="Hsiao S.-H."/>
            <person name="Tseng I.C."/>
            <person name="Hsing Y.-I.C."/>
            <person name="Wu H.-P."/>
            <person name="Chen C.-S."/>
            <person name="Shaw J.-F."/>
            <person name="Wu J."/>
            <person name="Matsumoto T."/>
            <person name="Sasaki T."/>
            <person name="Chen H.-C."/>
            <person name="Chow T.-Y."/>
        </authorList>
    </citation>
    <scope>NUCLEOTIDE SEQUENCE [LARGE SCALE GENOMIC DNA]</scope>
    <source>
        <strain>cv. Nipponbare</strain>
    </source>
</reference>
<reference key="4">
    <citation type="journal article" date="2005" name="Nature">
        <title>The map-based sequence of the rice genome.</title>
        <authorList>
            <consortium name="International rice genome sequencing project (IRGSP)"/>
        </authorList>
    </citation>
    <scope>NUCLEOTIDE SEQUENCE [LARGE SCALE GENOMIC DNA]</scope>
    <source>
        <strain>cv. Nipponbare</strain>
    </source>
</reference>
<reference key="5">
    <citation type="journal article" date="2008" name="Nucleic Acids Res.">
        <title>The rice annotation project database (RAP-DB): 2008 update.</title>
        <authorList>
            <consortium name="The rice annotation project (RAP)"/>
        </authorList>
    </citation>
    <scope>GENOME REANNOTATION</scope>
    <source>
        <strain>cv. Nipponbare</strain>
    </source>
</reference>
<reference key="6">
    <citation type="journal article" date="2013" name="Rice">
        <title>Improvement of the Oryza sativa Nipponbare reference genome using next generation sequence and optical map data.</title>
        <authorList>
            <person name="Kawahara Y."/>
            <person name="de la Bastide M."/>
            <person name="Hamilton J.P."/>
            <person name="Kanamori H."/>
            <person name="McCombie W.R."/>
            <person name="Ouyang S."/>
            <person name="Schwartz D.C."/>
            <person name="Tanaka T."/>
            <person name="Wu J."/>
            <person name="Zhou S."/>
            <person name="Childs K.L."/>
            <person name="Davidson R.M."/>
            <person name="Lin H."/>
            <person name="Quesada-Ocampo L."/>
            <person name="Vaillancourt B."/>
            <person name="Sakai H."/>
            <person name="Lee S.S."/>
            <person name="Kim J."/>
            <person name="Numa H."/>
            <person name="Itoh T."/>
            <person name="Buell C.R."/>
            <person name="Matsumoto T."/>
        </authorList>
    </citation>
    <scope>GENOME REANNOTATION</scope>
    <source>
        <strain>cv. Nipponbare</strain>
    </source>
</reference>
<reference key="7">
    <citation type="journal article" date="2007" name="Plant Sci.">
        <title>Genome-scale identification and analysis of LEA genes in rice (Oryza sativa L.).</title>
        <authorList>
            <person name="Wang X.S."/>
            <person name="Zhu H.B."/>
            <person name="Jin G.L."/>
            <person name="Liu H.L."/>
            <person name="Wu W.R."/>
            <person name="Zhu J."/>
        </authorList>
    </citation>
    <scope>GENE FAMILY</scope>
    <scope>NOMENCLATURE</scope>
</reference>
<reference key="8">
    <citation type="journal article" date="2010" name="Plant Mol. Biol.">
        <title>The bZIP transcription factor OsABF1 is an ABA responsive element binding factor that enhances abiotic stress signaling in rice.</title>
        <authorList>
            <person name="Amir Hossain M."/>
            <person name="Lee Y."/>
            <person name="Cho J.I."/>
            <person name="Ahn C.H."/>
            <person name="Lee S.K."/>
            <person name="Jeon J.S."/>
            <person name="Kang H."/>
            <person name="Lee C.H."/>
            <person name="An G."/>
            <person name="Park P.B."/>
        </authorList>
    </citation>
    <scope>INDUCTION BY ABSCISIC ACID</scope>
</reference>
<reference key="9">
    <citation type="journal article" date="2003" name="Science">
        <title>Collection, mapping, and annotation of over 28,000 cDNA clones from japonica rice.</title>
        <authorList>
            <consortium name="The rice full-length cDNA consortium"/>
        </authorList>
    </citation>
    <scope>NUCLEOTIDE SEQUENCE [LARGE SCALE MRNA] (ISOFORMS 1 AND 2)</scope>
    <source>
        <strain>cv. Nipponbare</strain>
    </source>
</reference>
<keyword id="KW-0025">Alternative splicing</keyword>
<keyword id="KW-0175">Coiled coil</keyword>
<keyword id="KW-1185">Reference proteome</keyword>
<keyword id="KW-0346">Stress response</keyword>
<sequence length="200" mass="20514">MASHQDQASYRAGETKAHTEEKAGQVMGASKDKASEAKDRASEAAGHAAGKGQDTKEATKEKAQAAKERASETAQAAKDKTSSTSQAARDKAAESKDQTGGFLGEKTEQAKQKAAETAGAAKQKTAETAQYTKDSAIAGKDKTGSVLQQASEQVKSTVVGAKDAVMSTLGMTEDEAGTDDGANKDTSATAAATETTARDH</sequence>
<organism>
    <name type="scientific">Oryza sativa subsp. japonica</name>
    <name type="common">Rice</name>
    <dbReference type="NCBI Taxonomy" id="39947"/>
    <lineage>
        <taxon>Eukaryota</taxon>
        <taxon>Viridiplantae</taxon>
        <taxon>Streptophyta</taxon>
        <taxon>Embryophyta</taxon>
        <taxon>Tracheophyta</taxon>
        <taxon>Spermatophyta</taxon>
        <taxon>Magnoliopsida</taxon>
        <taxon>Liliopsida</taxon>
        <taxon>Poales</taxon>
        <taxon>Poaceae</taxon>
        <taxon>BOP clade</taxon>
        <taxon>Oryzoideae</taxon>
        <taxon>Oryzeae</taxon>
        <taxon>Oryzinae</taxon>
        <taxon>Oryza</taxon>
        <taxon>Oryza sativa</taxon>
    </lineage>
</organism>
<feature type="chain" id="PRO_0000271182" description="Late embryogenesis abundant protein 19">
    <location>
        <begin position="1"/>
        <end position="200"/>
    </location>
</feature>
<feature type="region of interest" description="Disordered" evidence="3">
    <location>
        <begin position="1"/>
        <end position="145"/>
    </location>
</feature>
<feature type="region of interest" description="Disordered" evidence="3">
    <location>
        <begin position="172"/>
        <end position="200"/>
    </location>
</feature>
<feature type="coiled-coil region" evidence="2">
    <location>
        <begin position="52"/>
        <end position="81"/>
    </location>
</feature>
<feature type="compositionally biased region" description="Basic and acidic residues" evidence="3">
    <location>
        <begin position="13"/>
        <end position="23"/>
    </location>
</feature>
<feature type="compositionally biased region" description="Basic and acidic residues" evidence="3">
    <location>
        <begin position="30"/>
        <end position="42"/>
    </location>
</feature>
<feature type="compositionally biased region" description="Basic and acidic residues" evidence="3">
    <location>
        <begin position="53"/>
        <end position="81"/>
    </location>
</feature>
<feature type="compositionally biased region" description="Basic and acidic residues" evidence="3">
    <location>
        <begin position="88"/>
        <end position="97"/>
    </location>
</feature>
<feature type="compositionally biased region" description="Basic and acidic residues" evidence="3">
    <location>
        <begin position="105"/>
        <end position="114"/>
    </location>
</feature>
<feature type="compositionally biased region" description="Low complexity" evidence="3">
    <location>
        <begin position="115"/>
        <end position="130"/>
    </location>
</feature>
<feature type="compositionally biased region" description="Low complexity" evidence="3">
    <location>
        <begin position="186"/>
        <end position="200"/>
    </location>
</feature>
<feature type="splice variant" id="VSP_027161" description="In isoform 2." evidence="5">
    <location>
        <begin position="1"/>
        <end position="26"/>
    </location>
</feature>
<feature type="splice variant" id="VSP_027162" description="In isoform 2." evidence="5">
    <original>ASEQVKSTVVGAKDAVMSTLGM</original>
    <variation>VHTGLKAILPPFFFFLRGAEVP</variation>
    <location>
        <begin position="150"/>
        <end position="171"/>
    </location>
</feature>
<feature type="splice variant" id="VSP_027163" description="In isoform 2." evidence="5">
    <location>
        <begin position="172"/>
        <end position="200"/>
    </location>
</feature>
<feature type="sequence conflict" description="In Ref. 2; AAD02421." evidence="8" ref="2">
    <original>E</original>
    <variation>D</variation>
    <location>
        <position position="61"/>
    </location>
</feature>
<feature type="sequence conflict" description="In Ref. 2; AAD02421." evidence="8" ref="2">
    <original>E</original>
    <variation>D</variation>
    <location>
        <position position="68"/>
    </location>
</feature>
<feature type="sequence conflict" description="In Ref. 2; AAD02421." evidence="8" ref="2">
    <original>A</original>
    <variation>P</variation>
    <location>
        <position position="126"/>
    </location>
</feature>
<feature type="sequence conflict" description="In Ref. 9; AK119713." evidence="8" ref="9">
    <original>T</original>
    <variation>A</variation>
    <location>
        <position position="193"/>
    </location>
</feature>
<gene>
    <name evidence="7" type="primary">LEA19</name>
    <name evidence="8" type="synonym">LEA</name>
    <name evidence="6" type="synonym">LEA3</name>
    <name evidence="8" type="synonym">LEA3-1</name>
    <name evidence="11" type="ordered locus">Os05g0542500</name>
    <name evidence="8" type="ordered locus">LOC_Os05g46480</name>
    <name evidence="9" type="ORF">OJ1288_A07.1</name>
    <name evidence="10" type="ORF">OJ1362_G11.19</name>
</gene>
<comment type="function">
    <text evidence="1">Involved in response to stress.</text>
</comment>
<comment type="alternative products">
    <event type="alternative splicing"/>
    <isoform>
        <id>P0C5A4-1</id>
        <name>1</name>
        <sequence type="displayed"/>
    </isoform>
    <isoform>
        <id>P0C5A4-2</id>
        <name>2</name>
        <sequence type="described" ref="VSP_027161 VSP_027162 VSP_027163"/>
    </isoform>
</comment>
<comment type="induction">
    <text evidence="4">Induced by abscisic acid (ABA).</text>
</comment>
<comment type="similarity">
    <text evidence="8">Belongs to the LEA type 4 family.</text>
</comment>
<proteinExistence type="evidence at transcript level"/>
<dbReference type="EMBL" id="U57641">
    <property type="protein sequence ID" value="AAC03364.1"/>
    <property type="molecule type" value="mRNA"/>
</dbReference>
<dbReference type="EMBL" id="AF046884">
    <property type="protein sequence ID" value="AAD02421.1"/>
    <property type="molecule type" value="Genomic_DNA"/>
</dbReference>
<dbReference type="EMBL" id="AC098833">
    <property type="protein sequence ID" value="AAU43988.1"/>
    <property type="molecule type" value="Genomic_DNA"/>
</dbReference>
<dbReference type="EMBL" id="AC104713">
    <property type="protein sequence ID" value="AAV67829.1"/>
    <property type="molecule type" value="Genomic_DNA"/>
</dbReference>
<dbReference type="EMBL" id="AP008211">
    <property type="protein sequence ID" value="BAF18109.1"/>
    <property type="molecule type" value="Genomic_DNA"/>
</dbReference>
<dbReference type="EMBL" id="AP014961">
    <property type="protein sequence ID" value="BAS95138.1"/>
    <property type="molecule type" value="Genomic_DNA"/>
</dbReference>
<dbReference type="EMBL" id="AP014961">
    <property type="protein sequence ID" value="BAS95139.1"/>
    <property type="molecule type" value="Genomic_DNA"/>
</dbReference>
<dbReference type="EMBL" id="AK063984">
    <property type="status" value="NOT_ANNOTATED_CDS"/>
    <property type="molecule type" value="mRNA"/>
</dbReference>
<dbReference type="EMBL" id="AK119713">
    <property type="status" value="NOT_ANNOTATED_CDS"/>
    <property type="molecule type" value="mRNA"/>
</dbReference>
<dbReference type="PIR" id="T04147">
    <property type="entry name" value="T04147"/>
</dbReference>
<dbReference type="RefSeq" id="NP_001389550.1">
    <molecule id="P0C5A4-1"/>
    <property type="nucleotide sequence ID" value="NM_001402621.1"/>
</dbReference>
<dbReference type="RefSeq" id="XP_015637572.1">
    <property type="nucleotide sequence ID" value="XM_015782086.1"/>
</dbReference>
<dbReference type="SMR" id="P0C5A4"/>
<dbReference type="FunCoup" id="P0C5A4">
    <property type="interactions" value="114"/>
</dbReference>
<dbReference type="STRING" id="39947.P0C5A4"/>
<dbReference type="PaxDb" id="39947-P0C5A4"/>
<dbReference type="EnsemblPlants" id="Os05t0542500-02">
    <molecule id="P0C5A4-1"/>
    <property type="protein sequence ID" value="Os05t0542500-02"/>
    <property type="gene ID" value="Os05g0542500"/>
</dbReference>
<dbReference type="GeneID" id="4339480"/>
<dbReference type="Gramene" id="Os05t0542500-02">
    <molecule id="P0C5A4-1"/>
    <property type="protein sequence ID" value="Os05t0542500-02"/>
    <property type="gene ID" value="Os05g0542500"/>
</dbReference>
<dbReference type="KEGG" id="dosa:Os05g0542500"/>
<dbReference type="eggNOG" id="KOG4744">
    <property type="taxonomic scope" value="Eukaryota"/>
</dbReference>
<dbReference type="HOGENOM" id="CLU_100093_1_0_1"/>
<dbReference type="InParanoid" id="P0C5A4"/>
<dbReference type="OMA" id="MDAMATQ"/>
<dbReference type="OrthoDB" id="2193576at2759"/>
<dbReference type="PlantReactome" id="R-OSA-8879007">
    <property type="pathway name" value="Response to cold temperature"/>
</dbReference>
<dbReference type="Proteomes" id="UP000000763">
    <property type="component" value="Chromosome 5"/>
</dbReference>
<dbReference type="Proteomes" id="UP000059680">
    <property type="component" value="Chromosome 5"/>
</dbReference>
<dbReference type="ExpressionAtlas" id="P0C5A4">
    <property type="expression patterns" value="baseline and differential"/>
</dbReference>
<dbReference type="GO" id="GO:0005634">
    <property type="term" value="C:nucleus"/>
    <property type="evidence" value="ECO:0000318"/>
    <property type="project" value="GO_Central"/>
</dbReference>
<dbReference type="Gene3D" id="1.20.120.20">
    <property type="entry name" value="Apolipoprotein"/>
    <property type="match status" value="1"/>
</dbReference>
<dbReference type="PANTHER" id="PTHR47372">
    <property type="entry name" value="DAUER UP-REGULATED-RELATED"/>
    <property type="match status" value="1"/>
</dbReference>
<dbReference type="PANTHER" id="PTHR47372:SF11">
    <property type="entry name" value="RE19971P"/>
    <property type="match status" value="1"/>
</dbReference>